<keyword id="KW-0067">ATP-binding</keyword>
<keyword id="KW-0342">GTP-binding</keyword>
<keyword id="KW-0547">Nucleotide-binding</keyword>
<keyword id="KW-1185">Reference proteome</keyword>
<feature type="chain" id="PRO_0000383206" description="Nucleotide-binding protein Acel_1111">
    <location>
        <begin position="1"/>
        <end position="311"/>
    </location>
</feature>
<feature type="binding site" evidence="1">
    <location>
        <begin position="30"/>
        <end position="37"/>
    </location>
    <ligand>
        <name>ATP</name>
        <dbReference type="ChEBI" id="CHEBI:30616"/>
    </ligand>
</feature>
<feature type="binding site" evidence="1">
    <location>
        <begin position="81"/>
        <end position="84"/>
    </location>
    <ligand>
        <name>GTP</name>
        <dbReference type="ChEBI" id="CHEBI:37565"/>
    </ligand>
</feature>
<protein>
    <recommendedName>
        <fullName evidence="1">Nucleotide-binding protein Acel_1111</fullName>
    </recommendedName>
</protein>
<proteinExistence type="inferred from homology"/>
<dbReference type="EMBL" id="CP000481">
    <property type="protein sequence ID" value="ABK52883.1"/>
    <property type="molecule type" value="Genomic_DNA"/>
</dbReference>
<dbReference type="RefSeq" id="WP_011719946.1">
    <property type="nucleotide sequence ID" value="NC_008578.1"/>
</dbReference>
<dbReference type="SMR" id="A0LTX3"/>
<dbReference type="FunCoup" id="A0LTX3">
    <property type="interactions" value="20"/>
</dbReference>
<dbReference type="STRING" id="351607.Acel_1111"/>
<dbReference type="KEGG" id="ace:Acel_1111"/>
<dbReference type="eggNOG" id="COG1660">
    <property type="taxonomic scope" value="Bacteria"/>
</dbReference>
<dbReference type="HOGENOM" id="CLU_059558_0_0_11"/>
<dbReference type="InParanoid" id="A0LTX3"/>
<dbReference type="Proteomes" id="UP000008221">
    <property type="component" value="Chromosome"/>
</dbReference>
<dbReference type="GO" id="GO:0005524">
    <property type="term" value="F:ATP binding"/>
    <property type="evidence" value="ECO:0007669"/>
    <property type="project" value="UniProtKB-UniRule"/>
</dbReference>
<dbReference type="GO" id="GO:0005525">
    <property type="term" value="F:GTP binding"/>
    <property type="evidence" value="ECO:0007669"/>
    <property type="project" value="UniProtKB-UniRule"/>
</dbReference>
<dbReference type="Gene3D" id="3.40.50.300">
    <property type="entry name" value="P-loop containing nucleotide triphosphate hydrolases"/>
    <property type="match status" value="1"/>
</dbReference>
<dbReference type="HAMAP" id="MF_00636">
    <property type="entry name" value="RapZ_like"/>
    <property type="match status" value="1"/>
</dbReference>
<dbReference type="InterPro" id="IPR027417">
    <property type="entry name" value="P-loop_NTPase"/>
</dbReference>
<dbReference type="InterPro" id="IPR005337">
    <property type="entry name" value="RapZ-like"/>
</dbReference>
<dbReference type="InterPro" id="IPR053930">
    <property type="entry name" value="RapZ-like_N"/>
</dbReference>
<dbReference type="InterPro" id="IPR053931">
    <property type="entry name" value="RapZ_C"/>
</dbReference>
<dbReference type="NCBIfam" id="NF003828">
    <property type="entry name" value="PRK05416.1"/>
    <property type="match status" value="1"/>
</dbReference>
<dbReference type="PANTHER" id="PTHR30448">
    <property type="entry name" value="RNASE ADAPTER PROTEIN RAPZ"/>
    <property type="match status" value="1"/>
</dbReference>
<dbReference type="PANTHER" id="PTHR30448:SF0">
    <property type="entry name" value="RNASE ADAPTER PROTEIN RAPZ"/>
    <property type="match status" value="1"/>
</dbReference>
<dbReference type="Pfam" id="PF22740">
    <property type="entry name" value="PapZ_C"/>
    <property type="match status" value="1"/>
</dbReference>
<dbReference type="Pfam" id="PF03668">
    <property type="entry name" value="RapZ-like_N"/>
    <property type="match status" value="1"/>
</dbReference>
<dbReference type="SUPFAM" id="SSF52540">
    <property type="entry name" value="P-loop containing nucleoside triphosphate hydrolases"/>
    <property type="match status" value="1"/>
</dbReference>
<comment type="function">
    <text evidence="1">Displays ATPase and GTPase activities.</text>
</comment>
<comment type="similarity">
    <text evidence="1">Belongs to the RapZ-like family.</text>
</comment>
<gene>
    <name type="ordered locus">Acel_1111</name>
</gene>
<sequence>MTGDVRRLPDGHAAPALNPLTGIKLVVLTGLSGAGRSTAAKCLEDLGWFVVDNLPPGLLDTMVDLGVRSGGAINKIAAVVDVRSRAFTSDLYGALGVLRNRGTALRIVFLEASDDELIRRFENVRRPHPLQGDGRLADGIARERELLRDVRGVADLVIDTTNLNVHELRGKIIAAFSDDNQPALRATVVSFGYKYGLPADADLVVDCRFLPNPHWVDELRPLTGRDDAVREYVLAQPGAQDFLDTYSKVLGTVVDGYLREGKRYLTLAVGCTGGKHRSVVIAEELAERLRRLATAESRIDVQVAHRDLGRE</sequence>
<name>Y1111_ACIC1</name>
<accession>A0LTX3</accession>
<evidence type="ECO:0000255" key="1">
    <source>
        <dbReference type="HAMAP-Rule" id="MF_00636"/>
    </source>
</evidence>
<organism>
    <name type="scientific">Acidothermus cellulolyticus (strain ATCC 43068 / DSM 8971 / 11B)</name>
    <dbReference type="NCBI Taxonomy" id="351607"/>
    <lineage>
        <taxon>Bacteria</taxon>
        <taxon>Bacillati</taxon>
        <taxon>Actinomycetota</taxon>
        <taxon>Actinomycetes</taxon>
        <taxon>Acidothermales</taxon>
        <taxon>Acidothermaceae</taxon>
        <taxon>Acidothermus</taxon>
    </lineage>
</organism>
<reference key="1">
    <citation type="journal article" date="2009" name="Genome Res.">
        <title>Complete genome of the cellulolytic thermophile Acidothermus cellulolyticus 11B provides insights into its ecophysiological and evolutionary adaptations.</title>
        <authorList>
            <person name="Barabote R.D."/>
            <person name="Xie G."/>
            <person name="Leu D.H."/>
            <person name="Normand P."/>
            <person name="Necsulea A."/>
            <person name="Daubin V."/>
            <person name="Medigue C."/>
            <person name="Adney W.S."/>
            <person name="Xu X.C."/>
            <person name="Lapidus A."/>
            <person name="Parales R.E."/>
            <person name="Detter C."/>
            <person name="Pujic P."/>
            <person name="Bruce D."/>
            <person name="Lavire C."/>
            <person name="Challacombe J.F."/>
            <person name="Brettin T.S."/>
            <person name="Berry A.M."/>
        </authorList>
    </citation>
    <scope>NUCLEOTIDE SEQUENCE [LARGE SCALE GENOMIC DNA]</scope>
    <source>
        <strain>ATCC 43068 / DSM 8971 / 11B</strain>
    </source>
</reference>